<proteinExistence type="inferred from homology"/>
<name>TRIQK_PONAB</name>
<keyword id="KW-0256">Endoplasmic reticulum</keyword>
<keyword id="KW-0472">Membrane</keyword>
<keyword id="KW-1185">Reference proteome</keyword>
<keyword id="KW-0812">Transmembrane</keyword>
<keyword id="KW-1133">Transmembrane helix</keyword>
<feature type="chain" id="PRO_0000340675" description="Triple QxxK/R motif-containing protein">
    <location>
        <begin position="1"/>
        <end position="86"/>
    </location>
</feature>
<feature type="transmembrane region" description="Helical" evidence="2">
    <location>
        <begin position="51"/>
        <end position="71"/>
    </location>
</feature>
<comment type="function">
    <text evidence="1">May play a role in cell growth and maintenance of cell morphology.</text>
</comment>
<comment type="subcellular location">
    <subcellularLocation>
        <location evidence="1">Endoplasmic reticulum membrane</location>
        <topology evidence="1">Single-pass membrane protein</topology>
    </subcellularLocation>
</comment>
<comment type="similarity">
    <text evidence="3">Belongs to the TRIQK family.</text>
</comment>
<gene>
    <name type="primary">TRIQK</name>
</gene>
<accession>Q5RDR6</accession>
<organism>
    <name type="scientific">Pongo abelii</name>
    <name type="common">Sumatran orangutan</name>
    <name type="synonym">Pongo pygmaeus abelii</name>
    <dbReference type="NCBI Taxonomy" id="9601"/>
    <lineage>
        <taxon>Eukaryota</taxon>
        <taxon>Metazoa</taxon>
        <taxon>Chordata</taxon>
        <taxon>Craniata</taxon>
        <taxon>Vertebrata</taxon>
        <taxon>Euteleostomi</taxon>
        <taxon>Mammalia</taxon>
        <taxon>Eutheria</taxon>
        <taxon>Euarchontoglires</taxon>
        <taxon>Primates</taxon>
        <taxon>Haplorrhini</taxon>
        <taxon>Catarrhini</taxon>
        <taxon>Hominidae</taxon>
        <taxon>Pongo</taxon>
    </lineage>
</organism>
<evidence type="ECO:0000250" key="1"/>
<evidence type="ECO:0000255" key="2"/>
<evidence type="ECO:0000305" key="3"/>
<protein>
    <recommendedName>
        <fullName>Triple QxxK/R motif-containing protein</fullName>
    </recommendedName>
    <alternativeName>
        <fullName>Triple repetitive-sequence of QXXK/R protein homolog</fullName>
    </alternativeName>
</protein>
<sequence>MGRKDAATIKLPVDQYRKQIGKQDYKKTKPILRATKLKAEAKKTAIGIKEVGLVLAAILALLLAFYAFFYLRLTTDDDPDLDQDED</sequence>
<dbReference type="EMBL" id="CR857836">
    <property type="protein sequence ID" value="CAH90091.1"/>
    <property type="molecule type" value="mRNA"/>
</dbReference>
<dbReference type="RefSeq" id="NP_001257463.1">
    <property type="nucleotide sequence ID" value="NM_001270534.1"/>
</dbReference>
<dbReference type="SMR" id="Q5RDR6"/>
<dbReference type="GeneID" id="100171879"/>
<dbReference type="KEGG" id="pon:100171879"/>
<dbReference type="CTD" id="286144"/>
<dbReference type="eggNOG" id="ENOG502S3QR">
    <property type="taxonomic scope" value="Eukaryota"/>
</dbReference>
<dbReference type="InParanoid" id="Q5RDR6"/>
<dbReference type="OrthoDB" id="10049402at2759"/>
<dbReference type="Proteomes" id="UP000001595">
    <property type="component" value="Unplaced"/>
</dbReference>
<dbReference type="GO" id="GO:0005789">
    <property type="term" value="C:endoplasmic reticulum membrane"/>
    <property type="evidence" value="ECO:0007669"/>
    <property type="project" value="UniProtKB-SubCell"/>
</dbReference>
<dbReference type="InterPro" id="IPR024842">
    <property type="entry name" value="TRIQK"/>
</dbReference>
<dbReference type="PANTHER" id="PTHR20583">
    <property type="entry name" value="TRIPLE QXXK/R MOTIF-CONTAINING PROTEIN"/>
    <property type="match status" value="1"/>
</dbReference>
<dbReference type="PANTHER" id="PTHR20583:SF1">
    <property type="entry name" value="TRIPLE QXXK_R MOTIF-CONTAINING PROTEIN"/>
    <property type="match status" value="1"/>
</dbReference>
<dbReference type="Pfam" id="PF15168">
    <property type="entry name" value="TRIQK"/>
    <property type="match status" value="1"/>
</dbReference>
<reference key="1">
    <citation type="submission" date="2004-11" db="EMBL/GenBank/DDBJ databases">
        <authorList>
            <consortium name="The German cDNA consortium"/>
        </authorList>
    </citation>
    <scope>NUCLEOTIDE SEQUENCE [LARGE SCALE MRNA]</scope>
    <source>
        <tissue>Brain cortex</tissue>
    </source>
</reference>